<accession>B3W789</accession>
<gene>
    <name evidence="1" type="primary">rbsD</name>
    <name type="ordered locus">LCABL_03220</name>
</gene>
<reference key="1">
    <citation type="submission" date="2008-06" db="EMBL/GenBank/DDBJ databases">
        <title>Lactobacillus casei BL23 complete genome sequence.</title>
        <authorList>
            <person name="Maze A."/>
            <person name="Boel G."/>
            <person name="Bourand A."/>
            <person name="Loux V."/>
            <person name="Gibrat J.F."/>
            <person name="Zuniga M."/>
            <person name="Hartke A."/>
            <person name="Deutscher J."/>
        </authorList>
    </citation>
    <scope>NUCLEOTIDE SEQUENCE [LARGE SCALE GENOMIC DNA]</scope>
    <source>
        <strain>BL23</strain>
    </source>
</reference>
<comment type="function">
    <text evidence="1">Catalyzes the interconversion of beta-pyran and beta-furan forms of D-ribose.</text>
</comment>
<comment type="catalytic activity">
    <reaction evidence="1">
        <text>beta-D-ribopyranose = beta-D-ribofuranose</text>
        <dbReference type="Rhea" id="RHEA:25432"/>
        <dbReference type="ChEBI" id="CHEBI:27476"/>
        <dbReference type="ChEBI" id="CHEBI:47002"/>
        <dbReference type="EC" id="5.4.99.62"/>
    </reaction>
</comment>
<comment type="pathway">
    <text evidence="1">Carbohydrate metabolism; D-ribose degradation; D-ribose 5-phosphate from beta-D-ribopyranose: step 1/2.</text>
</comment>
<comment type="subunit">
    <text evidence="1">Homodecamer.</text>
</comment>
<comment type="subcellular location">
    <subcellularLocation>
        <location evidence="1">Cytoplasm</location>
    </subcellularLocation>
</comment>
<comment type="similarity">
    <text evidence="1">Belongs to the RbsD / FucU family. RbsD subfamily.</text>
</comment>
<keyword id="KW-0119">Carbohydrate metabolism</keyword>
<keyword id="KW-0963">Cytoplasm</keyword>
<keyword id="KW-0413">Isomerase</keyword>
<feature type="chain" id="PRO_1000187152" description="D-ribose pyranase">
    <location>
        <begin position="1"/>
        <end position="130"/>
    </location>
</feature>
<feature type="active site" description="Proton donor" evidence="1">
    <location>
        <position position="20"/>
    </location>
</feature>
<feature type="binding site" evidence="1">
    <location>
        <position position="28"/>
    </location>
    <ligand>
        <name>substrate</name>
    </ligand>
</feature>
<feature type="binding site" evidence="1">
    <location>
        <position position="97"/>
    </location>
    <ligand>
        <name>substrate</name>
    </ligand>
</feature>
<feature type="binding site" evidence="1">
    <location>
        <begin position="119"/>
        <end position="121"/>
    </location>
    <ligand>
        <name>substrate</name>
    </ligand>
</feature>
<organism>
    <name type="scientific">Lacticaseibacillus casei (strain BL23)</name>
    <name type="common">Lactobacillus casei</name>
    <dbReference type="NCBI Taxonomy" id="543734"/>
    <lineage>
        <taxon>Bacteria</taxon>
        <taxon>Bacillati</taxon>
        <taxon>Bacillota</taxon>
        <taxon>Bacilli</taxon>
        <taxon>Lactobacillales</taxon>
        <taxon>Lactobacillaceae</taxon>
        <taxon>Lacticaseibacillus</taxon>
    </lineage>
</organism>
<protein>
    <recommendedName>
        <fullName evidence="1">D-ribose pyranase</fullName>
        <ecNumber evidence="1">5.4.99.62</ecNumber>
    </recommendedName>
</protein>
<proteinExistence type="inferred from homology"/>
<sequence>MKKGTVINTQLSQVIADMGHFDLLGIGDAGMPVPEDTWKIDLAVSKNLPSFIDVLKNVLSELQVQKVYLAEEIKTENPEQLKQIQQLIDVPIAFIPHDQMKQDLSKTKAFVRTGEMTPYSNILLESGVVF</sequence>
<name>RBSD_LACCB</name>
<dbReference type="EC" id="5.4.99.62" evidence="1"/>
<dbReference type="EMBL" id="FM177140">
    <property type="protein sequence ID" value="CAQ65448.1"/>
    <property type="molecule type" value="Genomic_DNA"/>
</dbReference>
<dbReference type="SMR" id="B3W789"/>
<dbReference type="KEGG" id="lcb:LCABL_03220"/>
<dbReference type="HOGENOM" id="CLU_135498_0_0_9"/>
<dbReference type="UniPathway" id="UPA00916">
    <property type="reaction ID" value="UER00888"/>
</dbReference>
<dbReference type="GO" id="GO:0005829">
    <property type="term" value="C:cytosol"/>
    <property type="evidence" value="ECO:0007669"/>
    <property type="project" value="TreeGrafter"/>
</dbReference>
<dbReference type="GO" id="GO:0062193">
    <property type="term" value="F:D-ribose pyranase activity"/>
    <property type="evidence" value="ECO:0007669"/>
    <property type="project" value="UniProtKB-EC"/>
</dbReference>
<dbReference type="GO" id="GO:0016872">
    <property type="term" value="F:intramolecular lyase activity"/>
    <property type="evidence" value="ECO:0007669"/>
    <property type="project" value="UniProtKB-UniRule"/>
</dbReference>
<dbReference type="GO" id="GO:0048029">
    <property type="term" value="F:monosaccharide binding"/>
    <property type="evidence" value="ECO:0007669"/>
    <property type="project" value="InterPro"/>
</dbReference>
<dbReference type="GO" id="GO:0019303">
    <property type="term" value="P:D-ribose catabolic process"/>
    <property type="evidence" value="ECO:0007669"/>
    <property type="project" value="UniProtKB-UniRule"/>
</dbReference>
<dbReference type="FunFam" id="3.40.1650.10:FF:000004">
    <property type="entry name" value="D-ribose pyranase"/>
    <property type="match status" value="1"/>
</dbReference>
<dbReference type="Gene3D" id="3.40.1650.10">
    <property type="entry name" value="RbsD-like domain"/>
    <property type="match status" value="1"/>
</dbReference>
<dbReference type="HAMAP" id="MF_01661">
    <property type="entry name" value="D_rib_pyranase"/>
    <property type="match status" value="1"/>
</dbReference>
<dbReference type="InterPro" id="IPR023064">
    <property type="entry name" value="D-ribose_pyranase"/>
</dbReference>
<dbReference type="InterPro" id="IPR023750">
    <property type="entry name" value="RbsD-like_sf"/>
</dbReference>
<dbReference type="InterPro" id="IPR007721">
    <property type="entry name" value="RbsD_FucU"/>
</dbReference>
<dbReference type="NCBIfam" id="NF008761">
    <property type="entry name" value="PRK11797.1"/>
    <property type="match status" value="1"/>
</dbReference>
<dbReference type="PANTHER" id="PTHR37831">
    <property type="entry name" value="D-RIBOSE PYRANASE"/>
    <property type="match status" value="1"/>
</dbReference>
<dbReference type="PANTHER" id="PTHR37831:SF1">
    <property type="entry name" value="D-RIBOSE PYRANASE"/>
    <property type="match status" value="1"/>
</dbReference>
<dbReference type="Pfam" id="PF05025">
    <property type="entry name" value="RbsD_FucU"/>
    <property type="match status" value="1"/>
</dbReference>
<dbReference type="SUPFAM" id="SSF102546">
    <property type="entry name" value="RbsD-like"/>
    <property type="match status" value="1"/>
</dbReference>
<evidence type="ECO:0000255" key="1">
    <source>
        <dbReference type="HAMAP-Rule" id="MF_01661"/>
    </source>
</evidence>